<organism>
    <name type="scientific">Nostoc punctiforme (strain ATCC 29133 / PCC 73102)</name>
    <dbReference type="NCBI Taxonomy" id="63737"/>
    <lineage>
        <taxon>Bacteria</taxon>
        <taxon>Bacillati</taxon>
        <taxon>Cyanobacteriota</taxon>
        <taxon>Cyanophyceae</taxon>
        <taxon>Nostocales</taxon>
        <taxon>Nostocaceae</taxon>
        <taxon>Nostoc</taxon>
    </lineage>
</organism>
<gene>
    <name evidence="1" type="primary">ycf4</name>
    <name type="ordered locus">Npun_F3638</name>
</gene>
<evidence type="ECO:0000255" key="1">
    <source>
        <dbReference type="HAMAP-Rule" id="MF_00437"/>
    </source>
</evidence>
<protein>
    <recommendedName>
        <fullName evidence="1">Photosystem I assembly protein Ycf4</fullName>
    </recommendedName>
</protein>
<keyword id="KW-0472">Membrane</keyword>
<keyword id="KW-0602">Photosynthesis</keyword>
<keyword id="KW-1185">Reference proteome</keyword>
<keyword id="KW-0793">Thylakoid</keyword>
<keyword id="KW-0812">Transmembrane</keyword>
<keyword id="KW-1133">Transmembrane helix</keyword>
<sequence>MTTSTTINKGDRLLHQNVLGSRRFSNYWWATIVTLGASGFLLAGISSYLKVNLLIVSDPTQLVFVPQGLVMGLYGAAGLLLATYLWLVILLDVGGGYNEFNQETGTIKIFRWGFPGKNRRIEIDSRIEDVQSVRIAVKEGLNPIRALYLRIKGRRDIPLTRVGQPLSLTELETEGAKLARFLGVSLEGL</sequence>
<reference key="1">
    <citation type="journal article" date="2013" name="Plant Physiol.">
        <title>A Nostoc punctiforme Sugar Transporter Necessary to Establish a Cyanobacterium-Plant Symbiosis.</title>
        <authorList>
            <person name="Ekman M."/>
            <person name="Picossi S."/>
            <person name="Campbell E.L."/>
            <person name="Meeks J.C."/>
            <person name="Flores E."/>
        </authorList>
    </citation>
    <scope>NUCLEOTIDE SEQUENCE [LARGE SCALE GENOMIC DNA]</scope>
    <source>
        <strain>ATCC 29133 / PCC 73102</strain>
    </source>
</reference>
<dbReference type="EMBL" id="CP001037">
    <property type="protein sequence ID" value="ACC82028.1"/>
    <property type="molecule type" value="Genomic_DNA"/>
</dbReference>
<dbReference type="RefSeq" id="WP_012409999.1">
    <property type="nucleotide sequence ID" value="NC_010628.1"/>
</dbReference>
<dbReference type="STRING" id="63737.Npun_F3638"/>
<dbReference type="EnsemblBacteria" id="ACC82028">
    <property type="protein sequence ID" value="ACC82028"/>
    <property type="gene ID" value="Npun_F3638"/>
</dbReference>
<dbReference type="KEGG" id="npu:Npun_F3638"/>
<dbReference type="eggNOG" id="ENOG502Z7YX">
    <property type="taxonomic scope" value="Bacteria"/>
</dbReference>
<dbReference type="HOGENOM" id="CLU_095465_0_0_3"/>
<dbReference type="OrthoDB" id="7059574at2"/>
<dbReference type="PhylomeDB" id="B2J2W1"/>
<dbReference type="Proteomes" id="UP000001191">
    <property type="component" value="Chromosome"/>
</dbReference>
<dbReference type="GO" id="GO:0009522">
    <property type="term" value="C:photosystem I"/>
    <property type="evidence" value="ECO:0007669"/>
    <property type="project" value="InterPro"/>
</dbReference>
<dbReference type="GO" id="GO:0031676">
    <property type="term" value="C:plasma membrane-derived thylakoid membrane"/>
    <property type="evidence" value="ECO:0007669"/>
    <property type="project" value="UniProtKB-SubCell"/>
</dbReference>
<dbReference type="GO" id="GO:0015979">
    <property type="term" value="P:photosynthesis"/>
    <property type="evidence" value="ECO:0007669"/>
    <property type="project" value="UniProtKB-UniRule"/>
</dbReference>
<dbReference type="HAMAP" id="MF_00437">
    <property type="entry name" value="Ycf4"/>
    <property type="match status" value="1"/>
</dbReference>
<dbReference type="InterPro" id="IPR003359">
    <property type="entry name" value="PSI_Ycf4_assembly"/>
</dbReference>
<dbReference type="NCBIfam" id="NF002712">
    <property type="entry name" value="PRK02542.1"/>
    <property type="match status" value="1"/>
</dbReference>
<dbReference type="PANTHER" id="PTHR33288">
    <property type="match status" value="1"/>
</dbReference>
<dbReference type="PANTHER" id="PTHR33288:SF4">
    <property type="entry name" value="PHOTOSYSTEM I ASSEMBLY PROTEIN YCF4"/>
    <property type="match status" value="1"/>
</dbReference>
<dbReference type="Pfam" id="PF02392">
    <property type="entry name" value="Ycf4"/>
    <property type="match status" value="1"/>
</dbReference>
<comment type="function">
    <text evidence="1">Seems to be required for the assembly of the photosystem I complex.</text>
</comment>
<comment type="subcellular location">
    <subcellularLocation>
        <location evidence="1">Cellular thylakoid membrane</location>
        <topology evidence="1">Multi-pass membrane protein</topology>
    </subcellularLocation>
</comment>
<comment type="similarity">
    <text evidence="1">Belongs to the Ycf4 family.</text>
</comment>
<accession>B2J2W1</accession>
<name>YCF4_NOSP7</name>
<proteinExistence type="inferred from homology"/>
<feature type="chain" id="PRO_1000200330" description="Photosystem I assembly protein Ycf4">
    <location>
        <begin position="1"/>
        <end position="189"/>
    </location>
</feature>
<feature type="transmembrane region" description="Helical" evidence="1">
    <location>
        <begin position="29"/>
        <end position="49"/>
    </location>
</feature>
<feature type="transmembrane region" description="Helical" evidence="1">
    <location>
        <begin position="69"/>
        <end position="89"/>
    </location>
</feature>